<feature type="initiator methionine" description="Removed" evidence="1">
    <location>
        <position position="1"/>
    </location>
</feature>
<feature type="chain" id="PRO_0000154616" description="Large ribosomal subunit protein uL10">
    <location>
        <begin position="2"/>
        <end position="20" status="greater than"/>
    </location>
</feature>
<feature type="non-terminal residue">
    <location>
        <position position="20"/>
    </location>
</feature>
<evidence type="ECO:0000250" key="1"/>
<evidence type="ECO:0000305" key="2"/>
<name>RL10_CITFR</name>
<sequence length="20" mass="2158">MALNLQDKQAIVAEVSEVAK</sequence>
<dbReference type="EMBL" id="X74448">
    <property type="protein sequence ID" value="CAA52459.1"/>
    <property type="molecule type" value="Genomic_DNA"/>
</dbReference>
<dbReference type="PIR" id="S35970">
    <property type="entry name" value="S35970"/>
</dbReference>
<dbReference type="STRING" id="1333848.CFNIH1_07520"/>
<dbReference type="GO" id="GO:1990904">
    <property type="term" value="C:ribonucleoprotein complex"/>
    <property type="evidence" value="ECO:0007669"/>
    <property type="project" value="UniProtKB-KW"/>
</dbReference>
<dbReference type="GO" id="GO:0005840">
    <property type="term" value="C:ribosome"/>
    <property type="evidence" value="ECO:0007669"/>
    <property type="project" value="UniProtKB-KW"/>
</dbReference>
<dbReference type="GO" id="GO:0019843">
    <property type="term" value="F:rRNA binding"/>
    <property type="evidence" value="ECO:0007669"/>
    <property type="project" value="UniProtKB-KW"/>
</dbReference>
<comment type="function">
    <text evidence="1">Forms part of the ribosomal stalk, playing a central role in the interaction of the ribosome with GTP-bound translation factors.</text>
</comment>
<comment type="subunit">
    <text evidence="1">Part of the ribosomal stalk of the 50S ribosomal subunit. The N-terminus interacts with L11 and the large rRNA to form the base of the stalk. The C-terminus forms an elongated spine to which L12 dimers bind in a sequential fashion forming a multimeric L10(L12)X complex (By similarity).</text>
</comment>
<comment type="similarity">
    <text evidence="2">Belongs to the universal ribosomal protein uL10 family.</text>
</comment>
<organism>
    <name type="scientific">Citrobacter freundii</name>
    <dbReference type="NCBI Taxonomy" id="546"/>
    <lineage>
        <taxon>Bacteria</taxon>
        <taxon>Pseudomonadati</taxon>
        <taxon>Pseudomonadota</taxon>
        <taxon>Gammaproteobacteria</taxon>
        <taxon>Enterobacterales</taxon>
        <taxon>Enterobacteriaceae</taxon>
        <taxon>Citrobacter</taxon>
        <taxon>Citrobacter freundii complex</taxon>
    </lineage>
</organism>
<gene>
    <name type="primary">rplJ</name>
</gene>
<accession>P43448</accession>
<keyword id="KW-0687">Ribonucleoprotein</keyword>
<keyword id="KW-0689">Ribosomal protein</keyword>
<keyword id="KW-0694">RNA-binding</keyword>
<keyword id="KW-0699">rRNA-binding</keyword>
<reference key="1">
    <citation type="submission" date="1993-08" db="EMBL/GenBank/DDBJ databases">
        <authorList>
            <person name="Zhyvoloup A.N."/>
        </authorList>
    </citation>
    <scope>NUCLEOTIDE SEQUENCE [GENOMIC DNA]</scope>
    <source>
        <strain>771</strain>
    </source>
</reference>
<protein>
    <recommendedName>
        <fullName evidence="2">Large ribosomal subunit protein uL10</fullName>
    </recommendedName>
    <alternativeName>
        <fullName>50S ribosomal protein L10</fullName>
    </alternativeName>
</protein>
<proteinExistence type="inferred from homology"/>